<reference key="1">
    <citation type="journal article" date="2009" name="BMC Genomics">
        <title>Evidence for niche adaptation in the genome of the bovine pathogen Streptococcus uberis.</title>
        <authorList>
            <person name="Ward P.N."/>
            <person name="Holden M.T.G."/>
            <person name="Leigh J.A."/>
            <person name="Lennard N."/>
            <person name="Bignell A."/>
            <person name="Barron A."/>
            <person name="Clark L."/>
            <person name="Quail M.A."/>
            <person name="Woodward J."/>
            <person name="Barrell B.G."/>
            <person name="Egan S.A."/>
            <person name="Field T.R."/>
            <person name="Maskell D."/>
            <person name="Kehoe M."/>
            <person name="Dowson C.G."/>
            <person name="Chanter N."/>
            <person name="Whatmore A.M."/>
            <person name="Bentley S.D."/>
            <person name="Parkhill J."/>
        </authorList>
    </citation>
    <scope>NUCLEOTIDE SEQUENCE [LARGE SCALE GENOMIC DNA]</scope>
    <source>
        <strain>ATCC BAA-854 / 0140J</strain>
    </source>
</reference>
<organism>
    <name type="scientific">Streptococcus uberis (strain ATCC BAA-854 / 0140J)</name>
    <dbReference type="NCBI Taxonomy" id="218495"/>
    <lineage>
        <taxon>Bacteria</taxon>
        <taxon>Bacillati</taxon>
        <taxon>Bacillota</taxon>
        <taxon>Bacilli</taxon>
        <taxon>Lactobacillales</taxon>
        <taxon>Streptococcaceae</taxon>
        <taxon>Streptococcus</taxon>
    </lineage>
</organism>
<comment type="function">
    <text evidence="1">Required for the formation of a threonylcarbamoyl group on adenosine at position 37 (t(6)A37) in tRNAs that read codons beginning with adenine. Is involved in the transfer of the threonylcarbamoyl moiety of threonylcarbamoyl-AMP (TC-AMP) to the N6 group of A37, together with TsaE and TsaB. TsaD likely plays a direct catalytic role in this reaction.</text>
</comment>
<comment type="catalytic activity">
    <reaction evidence="1">
        <text>L-threonylcarbamoyladenylate + adenosine(37) in tRNA = N(6)-L-threonylcarbamoyladenosine(37) in tRNA + AMP + H(+)</text>
        <dbReference type="Rhea" id="RHEA:37059"/>
        <dbReference type="Rhea" id="RHEA-COMP:10162"/>
        <dbReference type="Rhea" id="RHEA-COMP:10163"/>
        <dbReference type="ChEBI" id="CHEBI:15378"/>
        <dbReference type="ChEBI" id="CHEBI:73682"/>
        <dbReference type="ChEBI" id="CHEBI:74411"/>
        <dbReference type="ChEBI" id="CHEBI:74418"/>
        <dbReference type="ChEBI" id="CHEBI:456215"/>
        <dbReference type="EC" id="2.3.1.234"/>
    </reaction>
</comment>
<comment type="cofactor">
    <cofactor evidence="1">
        <name>Fe(2+)</name>
        <dbReference type="ChEBI" id="CHEBI:29033"/>
    </cofactor>
    <text evidence="1">Binds 1 Fe(2+) ion per subunit.</text>
</comment>
<comment type="subcellular location">
    <subcellularLocation>
        <location evidence="1">Cytoplasm</location>
    </subcellularLocation>
</comment>
<comment type="similarity">
    <text evidence="1">Belongs to the KAE1 / TsaD family.</text>
</comment>
<sequence>MKDRYILAVESSCDETSVAILKNDDVLLTNIIASQVESHKRFGGVVPEVASRHHVEVVTTCFQDALDEAGLEASDIDAVAVTYGPGLVGALLVGIAAAKAFAWANQIPLIPVNHMAGHLMAAREQKELSYPLMALLVSGGHTELVYVPKAGEYHIIGETRDDAVGEAYDKVGRVMGLTYPAGREIDQLAHQGRDTYDFPRAMIKEDHLEFSFSGLKSAFINLHHNAQQKGENLVLEDLCASFQAAVLDILLAKTKKALAKYPVNMLVVAGGVAANQGLRERLASDITETEVVIPPLRLCGDNAGMIALAAAIEYEKHHFAGWDLNAIPSLAFPNYKE</sequence>
<accession>B9DVQ7</accession>
<dbReference type="EC" id="2.3.1.234" evidence="1"/>
<dbReference type="EMBL" id="AM946015">
    <property type="protein sequence ID" value="CAR43453.1"/>
    <property type="molecule type" value="Genomic_DNA"/>
</dbReference>
<dbReference type="RefSeq" id="WP_015911915.1">
    <property type="nucleotide sequence ID" value="NC_012004.1"/>
</dbReference>
<dbReference type="SMR" id="B9DVQ7"/>
<dbReference type="STRING" id="218495.SUB1616"/>
<dbReference type="KEGG" id="sub:SUB1616"/>
<dbReference type="eggNOG" id="COG0533">
    <property type="taxonomic scope" value="Bacteria"/>
</dbReference>
<dbReference type="HOGENOM" id="CLU_023208_0_2_9"/>
<dbReference type="OrthoDB" id="9806197at2"/>
<dbReference type="Proteomes" id="UP000000449">
    <property type="component" value="Chromosome"/>
</dbReference>
<dbReference type="GO" id="GO:0005737">
    <property type="term" value="C:cytoplasm"/>
    <property type="evidence" value="ECO:0007669"/>
    <property type="project" value="UniProtKB-SubCell"/>
</dbReference>
<dbReference type="GO" id="GO:0005506">
    <property type="term" value="F:iron ion binding"/>
    <property type="evidence" value="ECO:0007669"/>
    <property type="project" value="UniProtKB-UniRule"/>
</dbReference>
<dbReference type="GO" id="GO:0061711">
    <property type="term" value="F:N(6)-L-threonylcarbamoyladenine synthase activity"/>
    <property type="evidence" value="ECO:0007669"/>
    <property type="project" value="UniProtKB-EC"/>
</dbReference>
<dbReference type="GO" id="GO:0002949">
    <property type="term" value="P:tRNA threonylcarbamoyladenosine modification"/>
    <property type="evidence" value="ECO:0007669"/>
    <property type="project" value="UniProtKB-UniRule"/>
</dbReference>
<dbReference type="CDD" id="cd24133">
    <property type="entry name" value="ASKHA_NBD_TsaD_bac"/>
    <property type="match status" value="1"/>
</dbReference>
<dbReference type="FunFam" id="3.30.420.40:FF:000012">
    <property type="entry name" value="tRNA N6-adenosine threonylcarbamoyltransferase"/>
    <property type="match status" value="1"/>
</dbReference>
<dbReference type="FunFam" id="3.30.420.40:FF:000040">
    <property type="entry name" value="tRNA N6-adenosine threonylcarbamoyltransferase"/>
    <property type="match status" value="1"/>
</dbReference>
<dbReference type="Gene3D" id="3.30.420.40">
    <property type="match status" value="2"/>
</dbReference>
<dbReference type="HAMAP" id="MF_01445">
    <property type="entry name" value="TsaD"/>
    <property type="match status" value="1"/>
</dbReference>
<dbReference type="InterPro" id="IPR043129">
    <property type="entry name" value="ATPase_NBD"/>
</dbReference>
<dbReference type="InterPro" id="IPR000905">
    <property type="entry name" value="Gcp-like_dom"/>
</dbReference>
<dbReference type="InterPro" id="IPR017861">
    <property type="entry name" value="KAE1/TsaD"/>
</dbReference>
<dbReference type="InterPro" id="IPR022450">
    <property type="entry name" value="TsaD"/>
</dbReference>
<dbReference type="NCBIfam" id="TIGR00329">
    <property type="entry name" value="gcp_kae1"/>
    <property type="match status" value="1"/>
</dbReference>
<dbReference type="NCBIfam" id="TIGR03723">
    <property type="entry name" value="T6A_TsaD_YgjD"/>
    <property type="match status" value="1"/>
</dbReference>
<dbReference type="PANTHER" id="PTHR11735">
    <property type="entry name" value="TRNA N6-ADENOSINE THREONYLCARBAMOYLTRANSFERASE"/>
    <property type="match status" value="1"/>
</dbReference>
<dbReference type="PANTHER" id="PTHR11735:SF6">
    <property type="entry name" value="TRNA N6-ADENOSINE THREONYLCARBAMOYLTRANSFERASE, MITOCHONDRIAL"/>
    <property type="match status" value="1"/>
</dbReference>
<dbReference type="Pfam" id="PF00814">
    <property type="entry name" value="TsaD"/>
    <property type="match status" value="1"/>
</dbReference>
<dbReference type="PRINTS" id="PR00789">
    <property type="entry name" value="OSIALOPTASE"/>
</dbReference>
<dbReference type="SUPFAM" id="SSF53067">
    <property type="entry name" value="Actin-like ATPase domain"/>
    <property type="match status" value="1"/>
</dbReference>
<name>TSAD_STRU0</name>
<proteinExistence type="inferred from homology"/>
<evidence type="ECO:0000255" key="1">
    <source>
        <dbReference type="HAMAP-Rule" id="MF_01445"/>
    </source>
</evidence>
<keyword id="KW-0012">Acyltransferase</keyword>
<keyword id="KW-0963">Cytoplasm</keyword>
<keyword id="KW-0408">Iron</keyword>
<keyword id="KW-0479">Metal-binding</keyword>
<keyword id="KW-1185">Reference proteome</keyword>
<keyword id="KW-0808">Transferase</keyword>
<keyword id="KW-0819">tRNA processing</keyword>
<protein>
    <recommendedName>
        <fullName evidence="1">tRNA N6-adenosine threonylcarbamoyltransferase</fullName>
        <ecNumber evidence="1">2.3.1.234</ecNumber>
    </recommendedName>
    <alternativeName>
        <fullName evidence="1">N6-L-threonylcarbamoyladenine synthase</fullName>
        <shortName evidence="1">t(6)A synthase</shortName>
    </alternativeName>
    <alternativeName>
        <fullName evidence="1">t(6)A37 threonylcarbamoyladenosine biosynthesis protein TsaD</fullName>
    </alternativeName>
    <alternativeName>
        <fullName evidence="1">tRNA threonylcarbamoyladenosine biosynthesis protein TsaD</fullName>
    </alternativeName>
</protein>
<feature type="chain" id="PRO_1000184984" description="tRNA N6-adenosine threonylcarbamoyltransferase">
    <location>
        <begin position="1"/>
        <end position="337"/>
    </location>
</feature>
<feature type="binding site" evidence="1">
    <location>
        <position position="114"/>
    </location>
    <ligand>
        <name>Fe cation</name>
        <dbReference type="ChEBI" id="CHEBI:24875"/>
    </ligand>
</feature>
<feature type="binding site" evidence="1">
    <location>
        <position position="118"/>
    </location>
    <ligand>
        <name>Fe cation</name>
        <dbReference type="ChEBI" id="CHEBI:24875"/>
    </ligand>
</feature>
<feature type="binding site" evidence="1">
    <location>
        <begin position="136"/>
        <end position="140"/>
    </location>
    <ligand>
        <name>substrate</name>
    </ligand>
</feature>
<feature type="binding site" evidence="1">
    <location>
        <position position="169"/>
    </location>
    <ligand>
        <name>substrate</name>
    </ligand>
</feature>
<feature type="binding site" evidence="1">
    <location>
        <position position="182"/>
    </location>
    <ligand>
        <name>substrate</name>
    </ligand>
</feature>
<feature type="binding site" evidence="1">
    <location>
        <position position="186"/>
    </location>
    <ligand>
        <name>substrate</name>
    </ligand>
</feature>
<feature type="binding site" evidence="1">
    <location>
        <position position="275"/>
    </location>
    <ligand>
        <name>substrate</name>
    </ligand>
</feature>
<feature type="binding site" evidence="1">
    <location>
        <position position="301"/>
    </location>
    <ligand>
        <name>Fe cation</name>
        <dbReference type="ChEBI" id="CHEBI:24875"/>
    </ligand>
</feature>
<gene>
    <name evidence="1" type="primary">tsaD</name>
    <name type="synonym">gcp</name>
    <name type="ordered locus">SUB1616</name>
</gene>